<gene>
    <name evidence="1" type="primary">tatE</name>
    <name type="ordered locus">CKO_02531</name>
</gene>
<comment type="function">
    <text evidence="1">Part of the twin-arginine translocation (Tat) system that transports large folded proteins containing a characteristic twin-arginine motif in their signal peptide across membranes. TatE shares overlapping functions with TatA.</text>
</comment>
<comment type="subcellular location">
    <subcellularLocation>
        <location evidence="1">Cell inner membrane</location>
        <topology evidence="1">Single-pass membrane protein</topology>
    </subcellularLocation>
</comment>
<comment type="similarity">
    <text evidence="1">Belongs to the TatA/E family. TatE subfamily.</text>
</comment>
<protein>
    <recommendedName>
        <fullName evidence="1">Probable Sec-independent protein translocase protein TatE</fullName>
    </recommendedName>
</protein>
<feature type="chain" id="PRO_0000412958" description="Probable Sec-independent protein translocase protein TatE">
    <location>
        <begin position="1"/>
        <end position="67"/>
    </location>
</feature>
<feature type="transmembrane region" description="Helical" evidence="1">
    <location>
        <begin position="4"/>
        <end position="21"/>
    </location>
</feature>
<feature type="region of interest" description="Disordered" evidence="2">
    <location>
        <begin position="46"/>
        <end position="67"/>
    </location>
</feature>
<name>TATE_CITK8</name>
<sequence>MGEISITKLLVVAALVVLLFGTRKLRTLGGDLGTAIKGFKKAMNDEDAGAKKEAGGDIQAEKLSHKE</sequence>
<reference key="1">
    <citation type="submission" date="2007-08" db="EMBL/GenBank/DDBJ databases">
        <authorList>
            <consortium name="The Citrobacter koseri Genome Sequencing Project"/>
            <person name="McClelland M."/>
            <person name="Sanderson E.K."/>
            <person name="Porwollik S."/>
            <person name="Spieth J."/>
            <person name="Clifton W.S."/>
            <person name="Latreille P."/>
            <person name="Courtney L."/>
            <person name="Wang C."/>
            <person name="Pepin K."/>
            <person name="Bhonagiri V."/>
            <person name="Nash W."/>
            <person name="Johnson M."/>
            <person name="Thiruvilangam P."/>
            <person name="Wilson R."/>
        </authorList>
    </citation>
    <scope>NUCLEOTIDE SEQUENCE [LARGE SCALE GENOMIC DNA]</scope>
    <source>
        <strain>ATCC BAA-895 / CDC 4225-83 / SGSC4696</strain>
    </source>
</reference>
<evidence type="ECO:0000255" key="1">
    <source>
        <dbReference type="HAMAP-Rule" id="MF_00903"/>
    </source>
</evidence>
<evidence type="ECO:0000256" key="2">
    <source>
        <dbReference type="SAM" id="MobiDB-lite"/>
    </source>
</evidence>
<organism>
    <name type="scientific">Citrobacter koseri (strain ATCC BAA-895 / CDC 4225-83 / SGSC4696)</name>
    <dbReference type="NCBI Taxonomy" id="290338"/>
    <lineage>
        <taxon>Bacteria</taxon>
        <taxon>Pseudomonadati</taxon>
        <taxon>Pseudomonadota</taxon>
        <taxon>Gammaproteobacteria</taxon>
        <taxon>Enterobacterales</taxon>
        <taxon>Enterobacteriaceae</taxon>
        <taxon>Citrobacter</taxon>
    </lineage>
</organism>
<dbReference type="EMBL" id="CP000822">
    <property type="protein sequence ID" value="ABV13640.1"/>
    <property type="molecule type" value="Genomic_DNA"/>
</dbReference>
<dbReference type="RefSeq" id="WP_012133359.1">
    <property type="nucleotide sequence ID" value="NC_009792.1"/>
</dbReference>
<dbReference type="SMR" id="A8AJH7"/>
<dbReference type="STRING" id="290338.CKO_02531"/>
<dbReference type="GeneID" id="45136407"/>
<dbReference type="KEGG" id="cko:CKO_02531"/>
<dbReference type="HOGENOM" id="CLU_086034_5_3_6"/>
<dbReference type="OrthoDB" id="7066617at2"/>
<dbReference type="Proteomes" id="UP000008148">
    <property type="component" value="Chromosome"/>
</dbReference>
<dbReference type="GO" id="GO:0033281">
    <property type="term" value="C:TAT protein transport complex"/>
    <property type="evidence" value="ECO:0007669"/>
    <property type="project" value="UniProtKB-UniRule"/>
</dbReference>
<dbReference type="GO" id="GO:0008320">
    <property type="term" value="F:protein transmembrane transporter activity"/>
    <property type="evidence" value="ECO:0007669"/>
    <property type="project" value="UniProtKB-UniRule"/>
</dbReference>
<dbReference type="GO" id="GO:0043953">
    <property type="term" value="P:protein transport by the Tat complex"/>
    <property type="evidence" value="ECO:0007669"/>
    <property type="project" value="UniProtKB-UniRule"/>
</dbReference>
<dbReference type="FunFam" id="1.20.5.3310:FF:000001">
    <property type="entry name" value="Probable Sec-independent protein translocase protein TatE"/>
    <property type="match status" value="1"/>
</dbReference>
<dbReference type="Gene3D" id="1.20.5.3310">
    <property type="match status" value="1"/>
</dbReference>
<dbReference type="HAMAP" id="MF_00236">
    <property type="entry name" value="TatA_E"/>
    <property type="match status" value="1"/>
</dbReference>
<dbReference type="HAMAP" id="MF_00903">
    <property type="entry name" value="TatE"/>
    <property type="match status" value="1"/>
</dbReference>
<dbReference type="InterPro" id="IPR003369">
    <property type="entry name" value="TatA/B/E"/>
</dbReference>
<dbReference type="InterPro" id="IPR006312">
    <property type="entry name" value="TatA/E"/>
</dbReference>
<dbReference type="InterPro" id="IPR024905">
    <property type="entry name" value="TatE"/>
</dbReference>
<dbReference type="NCBIfam" id="NF002448">
    <property type="entry name" value="PRK01614.1"/>
    <property type="match status" value="1"/>
</dbReference>
<dbReference type="NCBIfam" id="NF002960">
    <property type="entry name" value="PRK03625.1"/>
    <property type="match status" value="1"/>
</dbReference>
<dbReference type="NCBIfam" id="TIGR01411">
    <property type="entry name" value="tatAE"/>
    <property type="match status" value="1"/>
</dbReference>
<dbReference type="PANTHER" id="PTHR42982">
    <property type="entry name" value="SEC-INDEPENDENT PROTEIN TRANSLOCASE PROTEIN TATA"/>
    <property type="match status" value="1"/>
</dbReference>
<dbReference type="PANTHER" id="PTHR42982:SF5">
    <property type="entry name" value="SEC-INDEPENDENT PROTEIN TRANSLOCASE PROTEIN TATE"/>
    <property type="match status" value="1"/>
</dbReference>
<dbReference type="Pfam" id="PF02416">
    <property type="entry name" value="TatA_B_E"/>
    <property type="match status" value="1"/>
</dbReference>
<accession>A8AJH7</accession>
<proteinExistence type="inferred from homology"/>
<keyword id="KW-0997">Cell inner membrane</keyword>
<keyword id="KW-1003">Cell membrane</keyword>
<keyword id="KW-0472">Membrane</keyword>
<keyword id="KW-0653">Protein transport</keyword>
<keyword id="KW-1185">Reference proteome</keyword>
<keyword id="KW-0811">Translocation</keyword>
<keyword id="KW-0812">Transmembrane</keyword>
<keyword id="KW-1133">Transmembrane helix</keyword>
<keyword id="KW-0813">Transport</keyword>